<comment type="function">
    <text evidence="1">Produces ATP from ADP in the presence of a proton gradient across the membrane.</text>
</comment>
<comment type="subunit">
    <text>F-type ATPases have 2 components, CF(1) - the catalytic core - and CF(0) - the membrane proton channel. CF(1) has five subunits: alpha(3), beta(3), gamma(1), delta(1), epsilon(1). CF(0) has three main subunits: a, b and c.</text>
</comment>
<comment type="subcellular location">
    <subcellularLocation>
        <location evidence="1">Cellular thylakoid membrane</location>
        <topology evidence="1">Peripheral membrane protein</topology>
    </subcellularLocation>
</comment>
<comment type="similarity">
    <text evidence="1">Belongs to the ATPase epsilon chain family.</text>
</comment>
<reference key="1">
    <citation type="journal article" date="2007" name="PLoS Genet.">
        <title>Patterns and implications of gene gain and loss in the evolution of Prochlorococcus.</title>
        <authorList>
            <person name="Kettler G.C."/>
            <person name="Martiny A.C."/>
            <person name="Huang K."/>
            <person name="Zucker J."/>
            <person name="Coleman M.L."/>
            <person name="Rodrigue S."/>
            <person name="Chen F."/>
            <person name="Lapidus A."/>
            <person name="Ferriera S."/>
            <person name="Johnson J."/>
            <person name="Steglich C."/>
            <person name="Church G.M."/>
            <person name="Richardson P."/>
            <person name="Chisholm S.W."/>
        </authorList>
    </citation>
    <scope>NUCLEOTIDE SEQUENCE [LARGE SCALE GENOMIC DNA]</scope>
    <source>
        <strain>NATL2A</strain>
    </source>
</reference>
<keyword id="KW-0066">ATP synthesis</keyword>
<keyword id="KW-0139">CF(1)</keyword>
<keyword id="KW-0375">Hydrogen ion transport</keyword>
<keyword id="KW-0406">Ion transport</keyword>
<keyword id="KW-0472">Membrane</keyword>
<keyword id="KW-1185">Reference proteome</keyword>
<keyword id="KW-0793">Thylakoid</keyword>
<keyword id="KW-0813">Transport</keyword>
<organism>
    <name type="scientific">Prochlorococcus marinus (strain NATL2A)</name>
    <dbReference type="NCBI Taxonomy" id="59920"/>
    <lineage>
        <taxon>Bacteria</taxon>
        <taxon>Bacillati</taxon>
        <taxon>Cyanobacteriota</taxon>
        <taxon>Cyanophyceae</taxon>
        <taxon>Synechococcales</taxon>
        <taxon>Prochlorococcaceae</taxon>
        <taxon>Prochlorococcus</taxon>
    </lineage>
</organism>
<accession>Q46J67</accession>
<dbReference type="EMBL" id="CP000095">
    <property type="protein sequence ID" value="AAZ58461.1"/>
    <property type="molecule type" value="Genomic_DNA"/>
</dbReference>
<dbReference type="RefSeq" id="WP_011295317.1">
    <property type="nucleotide sequence ID" value="NC_007335.2"/>
</dbReference>
<dbReference type="SMR" id="Q46J67"/>
<dbReference type="STRING" id="59920.PMN2A_0971"/>
<dbReference type="KEGG" id="pmn:PMN2A_0971"/>
<dbReference type="HOGENOM" id="CLU_084338_1_2_3"/>
<dbReference type="OrthoDB" id="9804110at2"/>
<dbReference type="PhylomeDB" id="Q46J67"/>
<dbReference type="Proteomes" id="UP000002535">
    <property type="component" value="Chromosome"/>
</dbReference>
<dbReference type="GO" id="GO:0031676">
    <property type="term" value="C:plasma membrane-derived thylakoid membrane"/>
    <property type="evidence" value="ECO:0007669"/>
    <property type="project" value="UniProtKB-SubCell"/>
</dbReference>
<dbReference type="GO" id="GO:0045259">
    <property type="term" value="C:proton-transporting ATP synthase complex"/>
    <property type="evidence" value="ECO:0007669"/>
    <property type="project" value="UniProtKB-KW"/>
</dbReference>
<dbReference type="GO" id="GO:0005524">
    <property type="term" value="F:ATP binding"/>
    <property type="evidence" value="ECO:0007669"/>
    <property type="project" value="UniProtKB-UniRule"/>
</dbReference>
<dbReference type="GO" id="GO:0046933">
    <property type="term" value="F:proton-transporting ATP synthase activity, rotational mechanism"/>
    <property type="evidence" value="ECO:0007669"/>
    <property type="project" value="UniProtKB-UniRule"/>
</dbReference>
<dbReference type="CDD" id="cd12152">
    <property type="entry name" value="F1-ATPase_delta"/>
    <property type="match status" value="1"/>
</dbReference>
<dbReference type="Gene3D" id="2.60.15.10">
    <property type="entry name" value="F0F1 ATP synthase delta/epsilon subunit, N-terminal"/>
    <property type="match status" value="1"/>
</dbReference>
<dbReference type="Gene3D" id="1.10.287.540">
    <property type="entry name" value="Helix hairpin bin"/>
    <property type="match status" value="1"/>
</dbReference>
<dbReference type="HAMAP" id="MF_00530">
    <property type="entry name" value="ATP_synth_epsil_bac"/>
    <property type="match status" value="1"/>
</dbReference>
<dbReference type="InterPro" id="IPR001469">
    <property type="entry name" value="ATP_synth_F1_dsu/esu"/>
</dbReference>
<dbReference type="InterPro" id="IPR020546">
    <property type="entry name" value="ATP_synth_F1_dsu/esu_N"/>
</dbReference>
<dbReference type="InterPro" id="IPR020547">
    <property type="entry name" value="ATP_synth_F1_esu_C"/>
</dbReference>
<dbReference type="InterPro" id="IPR036771">
    <property type="entry name" value="ATPsynth_dsu/esu_N"/>
</dbReference>
<dbReference type="NCBIfam" id="TIGR01216">
    <property type="entry name" value="ATP_synt_epsi"/>
    <property type="match status" value="1"/>
</dbReference>
<dbReference type="PANTHER" id="PTHR13822">
    <property type="entry name" value="ATP SYNTHASE DELTA/EPSILON CHAIN"/>
    <property type="match status" value="1"/>
</dbReference>
<dbReference type="PANTHER" id="PTHR13822:SF10">
    <property type="entry name" value="ATP SYNTHASE EPSILON CHAIN, CHLOROPLASTIC"/>
    <property type="match status" value="1"/>
</dbReference>
<dbReference type="Pfam" id="PF00401">
    <property type="entry name" value="ATP-synt_DE"/>
    <property type="match status" value="1"/>
</dbReference>
<dbReference type="Pfam" id="PF02823">
    <property type="entry name" value="ATP-synt_DE_N"/>
    <property type="match status" value="1"/>
</dbReference>
<dbReference type="SUPFAM" id="SSF51344">
    <property type="entry name" value="Epsilon subunit of F1F0-ATP synthase N-terminal domain"/>
    <property type="match status" value="1"/>
</dbReference>
<name>ATPE_PROMT</name>
<feature type="chain" id="PRO_0000265858" description="ATP synthase epsilon chain">
    <location>
        <begin position="1"/>
        <end position="135"/>
    </location>
</feature>
<feature type="region of interest" description="Disordered" evidence="2">
    <location>
        <begin position="89"/>
        <end position="114"/>
    </location>
</feature>
<feature type="compositionally biased region" description="Basic and acidic residues" evidence="2">
    <location>
        <begin position="89"/>
        <end position="100"/>
    </location>
</feature>
<feature type="compositionally biased region" description="Polar residues" evidence="2">
    <location>
        <begin position="101"/>
        <end position="112"/>
    </location>
</feature>
<proteinExistence type="inferred from homology"/>
<evidence type="ECO:0000255" key="1">
    <source>
        <dbReference type="HAMAP-Rule" id="MF_00530"/>
    </source>
</evidence>
<evidence type="ECO:0000256" key="2">
    <source>
        <dbReference type="SAM" id="MobiDB-lite"/>
    </source>
</evidence>
<gene>
    <name evidence="1" type="primary">atpC</name>
    <name type="ordered locus">PMN2A_0971</name>
</gene>
<protein>
    <recommendedName>
        <fullName evidence="1">ATP synthase epsilon chain</fullName>
    </recommendedName>
    <alternativeName>
        <fullName evidence="1">ATP synthase F1 sector epsilon subunit</fullName>
    </alternativeName>
    <alternativeName>
        <fullName evidence="1">F-ATPase epsilon subunit</fullName>
    </alternativeName>
</protein>
<sequence length="135" mass="14514">MTLTLRVLAPDQSVFDDTADEIILPSTTGLLGVLPGHISMVTAIDFGVLRVLKNGNWDSIALTGGFAEVESNEVTVLVNKAEMGKNIDSGKAEAELEKAKNQLSQNKDQGNSPEKIKAQETLNKAKAWFQASKSD</sequence>